<organism>
    <name type="scientific">Dictyostelium discoideum</name>
    <name type="common">Social amoeba</name>
    <dbReference type="NCBI Taxonomy" id="44689"/>
    <lineage>
        <taxon>Eukaryota</taxon>
        <taxon>Amoebozoa</taxon>
        <taxon>Evosea</taxon>
        <taxon>Eumycetozoa</taxon>
        <taxon>Dictyostelia</taxon>
        <taxon>Dictyosteliales</taxon>
        <taxon>Dictyosteliaceae</taxon>
        <taxon>Dictyostelium</taxon>
    </lineage>
</organism>
<accession>Q54LS3</accession>
<gene>
    <name type="ORF">DDB_G0286439</name>
</gene>
<name>Y6982_DICDI</name>
<reference key="1">
    <citation type="journal article" date="2005" name="Nature">
        <title>The genome of the social amoeba Dictyostelium discoideum.</title>
        <authorList>
            <person name="Eichinger L."/>
            <person name="Pachebat J.A."/>
            <person name="Gloeckner G."/>
            <person name="Rajandream M.A."/>
            <person name="Sucgang R."/>
            <person name="Berriman M."/>
            <person name="Song J."/>
            <person name="Olsen R."/>
            <person name="Szafranski K."/>
            <person name="Xu Q."/>
            <person name="Tunggal B."/>
            <person name="Kummerfeld S."/>
            <person name="Madera M."/>
            <person name="Konfortov B.A."/>
            <person name="Rivero F."/>
            <person name="Bankier A.T."/>
            <person name="Lehmann R."/>
            <person name="Hamlin N."/>
            <person name="Davies R."/>
            <person name="Gaudet P."/>
            <person name="Fey P."/>
            <person name="Pilcher K."/>
            <person name="Chen G."/>
            <person name="Saunders D."/>
            <person name="Sodergren E.J."/>
            <person name="Davis P."/>
            <person name="Kerhornou A."/>
            <person name="Nie X."/>
            <person name="Hall N."/>
            <person name="Anjard C."/>
            <person name="Hemphill L."/>
            <person name="Bason N."/>
            <person name="Farbrother P."/>
            <person name="Desany B."/>
            <person name="Just E."/>
            <person name="Morio T."/>
            <person name="Rost R."/>
            <person name="Churcher C.M."/>
            <person name="Cooper J."/>
            <person name="Haydock S."/>
            <person name="van Driessche N."/>
            <person name="Cronin A."/>
            <person name="Goodhead I."/>
            <person name="Muzny D.M."/>
            <person name="Mourier T."/>
            <person name="Pain A."/>
            <person name="Lu M."/>
            <person name="Harper D."/>
            <person name="Lindsay R."/>
            <person name="Hauser H."/>
            <person name="James K.D."/>
            <person name="Quiles M."/>
            <person name="Madan Babu M."/>
            <person name="Saito T."/>
            <person name="Buchrieser C."/>
            <person name="Wardroper A."/>
            <person name="Felder M."/>
            <person name="Thangavelu M."/>
            <person name="Johnson D."/>
            <person name="Knights A."/>
            <person name="Loulseged H."/>
            <person name="Mungall K.L."/>
            <person name="Oliver K."/>
            <person name="Price C."/>
            <person name="Quail M.A."/>
            <person name="Urushihara H."/>
            <person name="Hernandez J."/>
            <person name="Rabbinowitsch E."/>
            <person name="Steffen D."/>
            <person name="Sanders M."/>
            <person name="Ma J."/>
            <person name="Kohara Y."/>
            <person name="Sharp S."/>
            <person name="Simmonds M.N."/>
            <person name="Spiegler S."/>
            <person name="Tivey A."/>
            <person name="Sugano S."/>
            <person name="White B."/>
            <person name="Walker D."/>
            <person name="Woodward J.R."/>
            <person name="Winckler T."/>
            <person name="Tanaka Y."/>
            <person name="Shaulsky G."/>
            <person name="Schleicher M."/>
            <person name="Weinstock G.M."/>
            <person name="Rosenthal A."/>
            <person name="Cox E.C."/>
            <person name="Chisholm R.L."/>
            <person name="Gibbs R.A."/>
            <person name="Loomis W.F."/>
            <person name="Platzer M."/>
            <person name="Kay R.R."/>
            <person name="Williams J.G."/>
            <person name="Dear P.H."/>
            <person name="Noegel A.A."/>
            <person name="Barrell B.G."/>
            <person name="Kuspa A."/>
        </authorList>
    </citation>
    <scope>NUCLEOTIDE SEQUENCE [LARGE SCALE GENOMIC DNA]</scope>
    <source>
        <strain>AX4</strain>
    </source>
</reference>
<protein>
    <recommendedName>
        <fullName>Putative uncharacterized protein DDB_G0286439</fullName>
    </recommendedName>
</protein>
<sequence>MTILESITKISNASMDINKINSNNSNNINNNSNKIIQQLPFINIYEKSICTAIIPHNEIERKMPIFKRFC</sequence>
<keyword id="KW-1185">Reference proteome</keyword>
<feature type="chain" id="PRO_0000348511" description="Putative uncharacterized protein DDB_G0286439">
    <location>
        <begin position="1"/>
        <end position="70"/>
    </location>
</feature>
<dbReference type="EMBL" id="AAFI02000085">
    <property type="protein sequence ID" value="EAL64244.1"/>
    <property type="molecule type" value="Genomic_DNA"/>
</dbReference>
<dbReference type="RefSeq" id="XP_637757.1">
    <property type="nucleotide sequence ID" value="XM_632665.1"/>
</dbReference>
<dbReference type="SMR" id="Q54LS3"/>
<dbReference type="PaxDb" id="44689-DDB0186982"/>
<dbReference type="EnsemblProtists" id="EAL64244">
    <property type="protein sequence ID" value="EAL64244"/>
    <property type="gene ID" value="DDB_G0286439"/>
</dbReference>
<dbReference type="GeneID" id="8625623"/>
<dbReference type="KEGG" id="ddi:DDB_G0286439"/>
<dbReference type="dictyBase" id="DDB_G0286439"/>
<dbReference type="VEuPathDB" id="AmoebaDB:DDB_G0286439"/>
<dbReference type="HOGENOM" id="CLU_2763180_0_0_1"/>
<dbReference type="InParanoid" id="Q54LS3"/>
<dbReference type="PRO" id="PR:Q54LS3"/>
<dbReference type="Proteomes" id="UP000002195">
    <property type="component" value="Chromosome 4"/>
</dbReference>
<proteinExistence type="predicted"/>